<organism>
    <name type="scientific">Mus musculus</name>
    <name type="common">Mouse</name>
    <dbReference type="NCBI Taxonomy" id="10090"/>
    <lineage>
        <taxon>Eukaryota</taxon>
        <taxon>Metazoa</taxon>
        <taxon>Chordata</taxon>
        <taxon>Craniata</taxon>
        <taxon>Vertebrata</taxon>
        <taxon>Euteleostomi</taxon>
        <taxon>Mammalia</taxon>
        <taxon>Eutheria</taxon>
        <taxon>Euarchontoglires</taxon>
        <taxon>Glires</taxon>
        <taxon>Rodentia</taxon>
        <taxon>Myomorpha</taxon>
        <taxon>Muroidea</taxon>
        <taxon>Muridae</taxon>
        <taxon>Murinae</taxon>
        <taxon>Mus</taxon>
        <taxon>Mus</taxon>
    </lineage>
</organism>
<keyword id="KW-1003">Cell membrane</keyword>
<keyword id="KW-1015">Disulfide bond</keyword>
<keyword id="KW-0256">Endoplasmic reticulum</keyword>
<keyword id="KW-0297">G-protein coupled receptor</keyword>
<keyword id="KW-0325">Glycoprotein</keyword>
<keyword id="KW-0472">Membrane</keyword>
<keyword id="KW-0597">Phosphoprotein</keyword>
<keyword id="KW-0628">Postsynaptic cell membrane</keyword>
<keyword id="KW-0675">Receptor</keyword>
<keyword id="KW-1185">Reference proteome</keyword>
<keyword id="KW-0770">Synapse</keyword>
<keyword id="KW-0807">Transducer</keyword>
<keyword id="KW-0812">Transmembrane</keyword>
<keyword id="KW-1133">Transmembrane helix</keyword>
<comment type="function">
    <text>The muscarinic acetylcholine receptor mediates various cellular responses, including inhibition of adenylate cyclase, breakdown of phosphoinositides and modulation of potassium channels through the action of G proteins. Primary transducing effect is Pi turnover.</text>
</comment>
<comment type="subunit">
    <text evidence="2 6">Homodimer; the dimers can form tetramers (By similarity). Interacts with NALCN (PubMed:19575010). Interacts with TMEM147 (By similarity).</text>
</comment>
<comment type="subcellular location">
    <subcellularLocation>
        <location evidence="2">Cell membrane</location>
        <topology evidence="3">Multi-pass membrane protein</topology>
    </subcellularLocation>
    <subcellularLocation>
        <location evidence="1">Postsynaptic cell membrane</location>
        <topology evidence="3">Multi-pass membrane protein</topology>
    </subcellularLocation>
    <subcellularLocation>
        <location evidence="2">Basolateral cell membrane</location>
        <topology evidence="3">Multi-pass membrane protein</topology>
    </subcellularLocation>
    <subcellularLocation>
        <location evidence="2">Endoplasmic reticulum membrane</location>
        <topology evidence="3">Multi-pass membrane protein</topology>
    </subcellularLocation>
    <text evidence="2">Colocalizes with TMEM147 in the endoplasmic reticulum (ER) membrane. TMEM147 impairs its trafficking to the cell membrane leading to its retention in the ER membrane.</text>
</comment>
<comment type="tissue specificity">
    <text evidence="7">Expressed in cerebral cortex, submandibular gland, hypothalamus, pancreas, liver, and ileum.</text>
</comment>
<comment type="similarity">
    <text evidence="4">Belongs to the G-protein coupled receptor 1 family. Muscarinic acetylcholine receptor subfamily. CHRM3 sub-subfamily.</text>
</comment>
<reference key="1">
    <citation type="submission" date="2000-09" db="EMBL/GenBank/DDBJ databases">
        <title>Isolation, sequence and functional expression of mouse muscarinic acetylcholine receptor genes.</title>
        <authorList>
            <person name="Gomeza J."/>
            <person name="Wess J."/>
        </authorList>
    </citation>
    <scope>NUCLEOTIDE SEQUENCE [GENOMIC DNA]</scope>
</reference>
<reference key="2">
    <citation type="journal article" date="1994" name="Eur. J. Neurosci.">
        <title>Cultured neurons from mouse brain reproduce the muscarinic receptor profile of their tissue of origin.</title>
        <authorList>
            <person name="Andre C."/>
            <person name="Dos Santos G."/>
            <person name="Koulakoff A."/>
        </authorList>
    </citation>
    <scope>NUCLEOTIDE SEQUENCE [MRNA] OF 314-439</scope>
    <source>
        <tissue>Brain</tissue>
    </source>
</reference>
<reference key="3">
    <citation type="journal article" date="2009" name="EMBO Rep.">
        <title>The NALCN ion channel is activated by M3 muscarinic receptors in a pancreatic beta-cell line.</title>
        <authorList>
            <person name="Swayne L.A."/>
            <person name="Mezghrani A."/>
            <person name="Varrault A."/>
            <person name="Chemin J."/>
            <person name="Bertrand G."/>
            <person name="Dalle S."/>
            <person name="Bourinet E."/>
            <person name="Lory P."/>
            <person name="Miller R.J."/>
            <person name="Nargeot J."/>
            <person name="Monteil A."/>
        </authorList>
    </citation>
    <scope>INTERACTION WITH NALCN</scope>
</reference>
<reference key="4">
    <citation type="journal article" date="2010" name="Cell">
        <title>A tissue-specific atlas of mouse protein phosphorylation and expression.</title>
        <authorList>
            <person name="Huttlin E.L."/>
            <person name="Jedrychowski M.P."/>
            <person name="Elias J.E."/>
            <person name="Goswami T."/>
            <person name="Rad R."/>
            <person name="Beausoleil S.A."/>
            <person name="Villen J."/>
            <person name="Haas W."/>
            <person name="Sowa M.E."/>
            <person name="Gygi S.P."/>
        </authorList>
    </citation>
    <scope>PHOSPHORYLATION [LARGE SCALE ANALYSIS] AT SER-384</scope>
    <scope>IDENTIFICATION BY MASS SPECTROMETRY [LARGE SCALE ANALYSIS]</scope>
    <source>
        <tissue>Brain</tissue>
    </source>
</reference>
<reference key="5">
    <citation type="journal article" date="2011" name="Mol. Pharmacol.">
        <title>Regulation of M(3) muscarinic receptor expression and function by transmembrane protein 147.</title>
        <authorList>
            <person name="Rosemond E."/>
            <person name="Rossi M."/>
            <person name="McMillin S.M."/>
            <person name="Scarselli M."/>
            <person name="Donaldson J.G."/>
            <person name="Wess J."/>
        </authorList>
    </citation>
    <scope>TISSUE SPECIFICITY</scope>
</reference>
<sequence>MTLHSNSTTSPLFPNISSSWVHSPSEAGLPLGTVSQLDSYNISQTSGNFSSNDTSSDPLGGHTIWQVVFIAFLTGFLALVTIIGNILVIVAFKVNKQLKTVNNYFLLSLACADLIIGVISMNLFTTYIIMNRWALGNLACDLWLSIDYVASNASVMNLLVISFDRYFSITRPLTYRAKRTTKRAGVMIGLAWVISFVLWAPAILFWQYFVGKRTVPPGECFIQFLSEPTITFGTAIAAFYMPVTIMTILYWRIYKETEKRTKELAGLQASGTEAEAENFVHPTGSSRSCSSYELQQQGTKRSSRRKYGGCHFWFTTKSWKPSAEQMDQDHSSSDSWNNNDAAASLENSASSDEEDIGSETRAIYSIVLKLPGHSTILNSTKLPSSDNLQVPDKDLGTMDVERNAHKLQAQKSMDDRDNCQKDFSKLPIQLESAVDTAKTSDTNSSVDKTTAALPLSFKEATLAKRFALKTRSQITKRKRMSLIKEKKAAQTLSAILLAFIITWTPYNIMVLVNTFCDSCIPKTYWNLGYWLCYINSTVNPVCYALCNKTFRTTFKMLLLCQCDKRKRRKQQYQQRQSVIFHKRVPEQAL</sequence>
<dbReference type="EMBL" id="AF264050">
    <property type="protein sequence ID" value="AAG14344.1"/>
    <property type="molecule type" value="Genomic_DNA"/>
</dbReference>
<dbReference type="EMBL" id="S74908">
    <property type="protein sequence ID" value="AAB33576.2"/>
    <property type="molecule type" value="mRNA"/>
</dbReference>
<dbReference type="CCDS" id="CCDS26238.1"/>
<dbReference type="RefSeq" id="NP_001415298.1">
    <property type="nucleotide sequence ID" value="NM_001428369.1"/>
</dbReference>
<dbReference type="RefSeq" id="NP_001415299.1">
    <property type="nucleotide sequence ID" value="NM_001428370.1"/>
</dbReference>
<dbReference type="RefSeq" id="NP_150372.1">
    <property type="nucleotide sequence ID" value="NM_033269.5"/>
</dbReference>
<dbReference type="RefSeq" id="XP_006516531.1">
    <property type="nucleotide sequence ID" value="XM_006516468.3"/>
</dbReference>
<dbReference type="SMR" id="Q9ERZ3"/>
<dbReference type="BioGRID" id="198707">
    <property type="interactions" value="1"/>
</dbReference>
<dbReference type="FunCoup" id="Q9ERZ3">
    <property type="interactions" value="922"/>
</dbReference>
<dbReference type="STRING" id="10090.ENSMUSP00000140131"/>
<dbReference type="BindingDB" id="Q9ERZ3"/>
<dbReference type="ChEMBL" id="CHEMBL5105"/>
<dbReference type="DrugCentral" id="Q9ERZ3"/>
<dbReference type="GlyCosmos" id="Q9ERZ3">
    <property type="glycosylation" value="5 sites, No reported glycans"/>
</dbReference>
<dbReference type="GlyGen" id="Q9ERZ3">
    <property type="glycosylation" value="5 sites"/>
</dbReference>
<dbReference type="iPTMnet" id="Q9ERZ3"/>
<dbReference type="PhosphoSitePlus" id="Q9ERZ3"/>
<dbReference type="SwissPalm" id="Q9ERZ3"/>
<dbReference type="PaxDb" id="10090-ENSMUSP00000140131"/>
<dbReference type="ProteomicsDB" id="285644"/>
<dbReference type="Antibodypedia" id="4169">
    <property type="antibodies" value="353 antibodies from 36 providers"/>
</dbReference>
<dbReference type="DNASU" id="12671"/>
<dbReference type="Ensembl" id="ENSMUST00000063093.10">
    <property type="protein sequence ID" value="ENSMUSP00000055579.10"/>
    <property type="gene ID" value="ENSMUSG00000046159.17"/>
</dbReference>
<dbReference type="Ensembl" id="ENSMUST00000187510.7">
    <property type="protein sequence ID" value="ENSMUSP00000140131.2"/>
    <property type="gene ID" value="ENSMUSG00000046159.17"/>
</dbReference>
<dbReference type="GeneID" id="12671"/>
<dbReference type="KEGG" id="mmu:12671"/>
<dbReference type="UCSC" id="uc007plb.1">
    <property type="organism name" value="mouse"/>
</dbReference>
<dbReference type="AGR" id="MGI:88398"/>
<dbReference type="CTD" id="1131"/>
<dbReference type="MGI" id="MGI:88398">
    <property type="gene designation" value="Chrm3"/>
</dbReference>
<dbReference type="VEuPathDB" id="HostDB:ENSMUSG00000046159"/>
<dbReference type="eggNOG" id="KOG4220">
    <property type="taxonomic scope" value="Eukaryota"/>
</dbReference>
<dbReference type="GeneTree" id="ENSGT00940000160084"/>
<dbReference type="HOGENOM" id="CLU_009579_11_2_1"/>
<dbReference type="InParanoid" id="Q9ERZ3"/>
<dbReference type="OMA" id="ISASWIH"/>
<dbReference type="OrthoDB" id="10071887at2759"/>
<dbReference type="PhylomeDB" id="Q9ERZ3"/>
<dbReference type="TreeFam" id="TF320495"/>
<dbReference type="Reactome" id="R-MMU-390648">
    <property type="pathway name" value="Muscarinic acetylcholine receptors"/>
</dbReference>
<dbReference type="Reactome" id="R-MMU-416476">
    <property type="pathway name" value="G alpha (q) signalling events"/>
</dbReference>
<dbReference type="BioGRID-ORCS" id="12671">
    <property type="hits" value="1 hit in 79 CRISPR screens"/>
</dbReference>
<dbReference type="ChiTaRS" id="Chrm3">
    <property type="organism name" value="mouse"/>
</dbReference>
<dbReference type="PRO" id="PR:Q9ERZ3"/>
<dbReference type="Proteomes" id="UP000000589">
    <property type="component" value="Chromosome 13"/>
</dbReference>
<dbReference type="RNAct" id="Q9ERZ3">
    <property type="molecule type" value="protein"/>
</dbReference>
<dbReference type="Bgee" id="ENSMUSG00000046159">
    <property type="expression patterns" value="Expressed in granulocyte and 88 other cell types or tissues"/>
</dbReference>
<dbReference type="ExpressionAtlas" id="Q9ERZ3">
    <property type="expression patterns" value="baseline and differential"/>
</dbReference>
<dbReference type="GO" id="GO:0016323">
    <property type="term" value="C:basolateral plasma membrane"/>
    <property type="evidence" value="ECO:0007669"/>
    <property type="project" value="UniProtKB-SubCell"/>
</dbReference>
<dbReference type="GO" id="GO:0005789">
    <property type="term" value="C:endoplasmic reticulum membrane"/>
    <property type="evidence" value="ECO:0007669"/>
    <property type="project" value="UniProtKB-SubCell"/>
</dbReference>
<dbReference type="GO" id="GO:0005886">
    <property type="term" value="C:plasma membrane"/>
    <property type="evidence" value="ECO:0000314"/>
    <property type="project" value="MGI"/>
</dbReference>
<dbReference type="GO" id="GO:0045211">
    <property type="term" value="C:postsynaptic membrane"/>
    <property type="evidence" value="ECO:0007669"/>
    <property type="project" value="UniProtKB-SubCell"/>
</dbReference>
<dbReference type="GO" id="GO:0042166">
    <property type="term" value="F:acetylcholine binding"/>
    <property type="evidence" value="ECO:0000250"/>
    <property type="project" value="UniProtKB"/>
</dbReference>
<dbReference type="GO" id="GO:0016907">
    <property type="term" value="F:G protein-coupled acetylcholine receptor activity"/>
    <property type="evidence" value="ECO:0000314"/>
    <property type="project" value="MGI"/>
</dbReference>
<dbReference type="GO" id="GO:0019722">
    <property type="term" value="P:calcium-mediated signaling"/>
    <property type="evidence" value="ECO:0007669"/>
    <property type="project" value="Ensembl"/>
</dbReference>
<dbReference type="GO" id="GO:0007213">
    <property type="term" value="P:G protein-coupled acetylcholine receptor signaling pathway"/>
    <property type="evidence" value="ECO:0000250"/>
    <property type="project" value="UniProtKB"/>
</dbReference>
<dbReference type="GO" id="GO:1990806">
    <property type="term" value="P:ligand-gated ion channel signaling pathway"/>
    <property type="evidence" value="ECO:0000314"/>
    <property type="project" value="MGI"/>
</dbReference>
<dbReference type="GO" id="GO:0007207">
    <property type="term" value="P:phospholipase C-activating G protein-coupled acetylcholine receptor signaling pathway"/>
    <property type="evidence" value="ECO:0000314"/>
    <property type="project" value="MGI"/>
</dbReference>
<dbReference type="GO" id="GO:0032024">
    <property type="term" value="P:positive regulation of insulin secretion"/>
    <property type="evidence" value="ECO:0000314"/>
    <property type="project" value="MGI"/>
</dbReference>
<dbReference type="GO" id="GO:0045987">
    <property type="term" value="P:positive regulation of smooth muscle contraction"/>
    <property type="evidence" value="ECO:0000314"/>
    <property type="project" value="MGI"/>
</dbReference>
<dbReference type="GO" id="GO:0046541">
    <property type="term" value="P:saliva secretion"/>
    <property type="evidence" value="ECO:0000315"/>
    <property type="project" value="MGI"/>
</dbReference>
<dbReference type="GO" id="GO:0006939">
    <property type="term" value="P:smooth muscle contraction"/>
    <property type="evidence" value="ECO:0000314"/>
    <property type="project" value="MGI"/>
</dbReference>
<dbReference type="GO" id="GO:0007271">
    <property type="term" value="P:synaptic transmission, cholinergic"/>
    <property type="evidence" value="ECO:0000315"/>
    <property type="project" value="MGI"/>
</dbReference>
<dbReference type="CDD" id="cd15299">
    <property type="entry name" value="7tmA_mAChR_M3"/>
    <property type="match status" value="1"/>
</dbReference>
<dbReference type="FunFam" id="1.20.1070.10:FF:000047">
    <property type="entry name" value="Muscarinic acetylcholine receptor"/>
    <property type="match status" value="1"/>
</dbReference>
<dbReference type="FunFam" id="1.20.1070.10:FF:000103">
    <property type="entry name" value="Muscarinic acetylcholine receptor"/>
    <property type="match status" value="1"/>
</dbReference>
<dbReference type="Gene3D" id="1.20.1070.10">
    <property type="entry name" value="Rhodopsin 7-helix transmembrane proteins"/>
    <property type="match status" value="2"/>
</dbReference>
<dbReference type="InterPro" id="IPR000276">
    <property type="entry name" value="GPCR_Rhodpsn"/>
</dbReference>
<dbReference type="InterPro" id="IPR017452">
    <property type="entry name" value="GPCR_Rhodpsn_7TM"/>
</dbReference>
<dbReference type="InterPro" id="IPR001183">
    <property type="entry name" value="Musac_Ach_M3_rcpt"/>
</dbReference>
<dbReference type="InterPro" id="IPR000995">
    <property type="entry name" value="Musac_Ach_rcpt"/>
</dbReference>
<dbReference type="PANTHER" id="PTHR24247">
    <property type="entry name" value="5-HYDROXYTRYPTAMINE RECEPTOR"/>
    <property type="match status" value="1"/>
</dbReference>
<dbReference type="PANTHER" id="PTHR24247:SF183">
    <property type="entry name" value="MUSCARINIC ACETYLCHOLINE RECEPTOR M3"/>
    <property type="match status" value="1"/>
</dbReference>
<dbReference type="Pfam" id="PF00001">
    <property type="entry name" value="7tm_1"/>
    <property type="match status" value="1"/>
</dbReference>
<dbReference type="PRINTS" id="PR00237">
    <property type="entry name" value="GPCRRHODOPSN"/>
</dbReference>
<dbReference type="PRINTS" id="PR00243">
    <property type="entry name" value="MUSCARINICR"/>
</dbReference>
<dbReference type="PRINTS" id="PR00540">
    <property type="entry name" value="MUSCRINICM3R"/>
</dbReference>
<dbReference type="SMART" id="SM01381">
    <property type="entry name" value="7TM_GPCR_Srsx"/>
    <property type="match status" value="1"/>
</dbReference>
<dbReference type="SUPFAM" id="SSF81321">
    <property type="entry name" value="Family A G protein-coupled receptor-like"/>
    <property type="match status" value="1"/>
</dbReference>
<dbReference type="PROSITE" id="PS00237">
    <property type="entry name" value="G_PROTEIN_RECEP_F1_1"/>
    <property type="match status" value="1"/>
</dbReference>
<dbReference type="PROSITE" id="PS50262">
    <property type="entry name" value="G_PROTEIN_RECEP_F1_2"/>
    <property type="match status" value="1"/>
</dbReference>
<accession>Q9ERZ3</accession>
<accession>Q64055</accession>
<gene>
    <name type="primary">Chrm3</name>
    <name type="synonym">Chrm-3</name>
</gene>
<protein>
    <recommendedName>
        <fullName>Muscarinic acetylcholine receptor M3</fullName>
    </recommendedName>
    <alternativeName>
        <fullName>Mm3 mAChR</fullName>
    </alternativeName>
</protein>
<proteinExistence type="evidence at protein level"/>
<feature type="chain" id="PRO_0000069030" description="Muscarinic acetylcholine receptor M3">
    <location>
        <begin position="1"/>
        <end position="589"/>
    </location>
</feature>
<feature type="topological domain" description="Extracellular" evidence="1">
    <location>
        <begin position="1"/>
        <end position="66"/>
    </location>
</feature>
<feature type="transmembrane region" description="Helical; Name=1" evidence="1">
    <location>
        <begin position="67"/>
        <end position="90"/>
    </location>
</feature>
<feature type="topological domain" description="Cytoplasmic" evidence="1">
    <location>
        <begin position="91"/>
        <end position="103"/>
    </location>
</feature>
<feature type="transmembrane region" description="Helical; Name=2" evidence="1">
    <location>
        <begin position="104"/>
        <end position="129"/>
    </location>
</feature>
<feature type="topological domain" description="Extracellular" evidence="1">
    <location>
        <begin position="130"/>
        <end position="141"/>
    </location>
</feature>
<feature type="transmembrane region" description="Helical; Name=3" evidence="1">
    <location>
        <begin position="142"/>
        <end position="163"/>
    </location>
</feature>
<feature type="topological domain" description="Cytoplasmic" evidence="1">
    <location>
        <begin position="164"/>
        <end position="183"/>
    </location>
</feature>
<feature type="transmembrane region" description="Helical; Name=4" evidence="1">
    <location>
        <begin position="184"/>
        <end position="205"/>
    </location>
</feature>
<feature type="topological domain" description="Extracellular" evidence="1">
    <location>
        <begin position="206"/>
        <end position="228"/>
    </location>
</feature>
<feature type="transmembrane region" description="Helical; Name=5" evidence="1">
    <location>
        <begin position="229"/>
        <end position="251"/>
    </location>
</feature>
<feature type="topological domain" description="Cytoplasmic" evidence="1">
    <location>
        <begin position="252"/>
        <end position="490"/>
    </location>
</feature>
<feature type="transmembrane region" description="Helical; Name=6" evidence="1">
    <location>
        <begin position="491"/>
        <end position="513"/>
    </location>
</feature>
<feature type="topological domain" description="Extracellular" evidence="1">
    <location>
        <begin position="514"/>
        <end position="525"/>
    </location>
</feature>
<feature type="transmembrane region" description="Helical; Name=7" evidence="1">
    <location>
        <begin position="526"/>
        <end position="545"/>
    </location>
</feature>
<feature type="topological domain" description="Cytoplasmic" evidence="1">
    <location>
        <begin position="546"/>
        <end position="589"/>
    </location>
</feature>
<feature type="region of interest" description="Disordered" evidence="5">
    <location>
        <begin position="275"/>
        <end position="295"/>
    </location>
</feature>
<feature type="region of interest" description="Disordered" evidence="5">
    <location>
        <begin position="323"/>
        <end position="356"/>
    </location>
</feature>
<feature type="short sequence motif" description="Basolateral sorting signal" evidence="1">
    <location>
        <begin position="274"/>
        <end position="280"/>
    </location>
</feature>
<feature type="compositionally biased region" description="Polar residues" evidence="5">
    <location>
        <begin position="283"/>
        <end position="295"/>
    </location>
</feature>
<feature type="compositionally biased region" description="Low complexity" evidence="5">
    <location>
        <begin position="333"/>
        <end position="344"/>
    </location>
</feature>
<feature type="modified residue" description="Phosphoserine" evidence="8">
    <location>
        <position position="384"/>
    </location>
</feature>
<feature type="glycosylation site" description="N-linked (GlcNAc...) asparagine" evidence="3">
    <location>
        <position position="6"/>
    </location>
</feature>
<feature type="glycosylation site" description="N-linked (GlcNAc...) asparagine" evidence="3">
    <location>
        <position position="15"/>
    </location>
</feature>
<feature type="glycosylation site" description="N-linked (GlcNAc...) asparagine" evidence="3">
    <location>
        <position position="41"/>
    </location>
</feature>
<feature type="glycosylation site" description="N-linked (GlcNAc...) asparagine" evidence="3">
    <location>
        <position position="48"/>
    </location>
</feature>
<feature type="glycosylation site" description="N-linked (GlcNAc...) asparagine" evidence="3">
    <location>
        <position position="52"/>
    </location>
</feature>
<feature type="disulfide bond" evidence="4">
    <location>
        <begin position="140"/>
        <end position="220"/>
    </location>
</feature>
<feature type="disulfide bond" evidence="4">
    <location>
        <begin position="516"/>
        <end position="519"/>
    </location>
</feature>
<evidence type="ECO:0000250" key="1"/>
<evidence type="ECO:0000250" key="2">
    <source>
        <dbReference type="UniProtKB" id="P20309"/>
    </source>
</evidence>
<evidence type="ECO:0000255" key="3"/>
<evidence type="ECO:0000255" key="4">
    <source>
        <dbReference type="PROSITE-ProRule" id="PRU00521"/>
    </source>
</evidence>
<evidence type="ECO:0000256" key="5">
    <source>
        <dbReference type="SAM" id="MobiDB-lite"/>
    </source>
</evidence>
<evidence type="ECO:0000269" key="6">
    <source>
    </source>
</evidence>
<evidence type="ECO:0000269" key="7">
    <source>
    </source>
</evidence>
<evidence type="ECO:0007744" key="8">
    <source>
    </source>
</evidence>
<name>ACM3_MOUSE</name>